<sequence>METIAKHRYANSSAQKLRLVINLIRGKEVSKALEILTYTNKKAANLVKKVLESAIANAEHNDGADVDDLKIAKIFVDVGPSIKRIMPRAKGRVDHILKRTSHITVVVSDR</sequence>
<reference key="1">
    <citation type="journal article" date="2006" name="PLoS Biol.">
        <title>Metabolic complementarity and genomics of the dual bacterial symbiosis of sharpshooters.</title>
        <authorList>
            <person name="Wu D."/>
            <person name="Daugherty S.C."/>
            <person name="Van Aken S.E."/>
            <person name="Pai G.H."/>
            <person name="Watkins K.L."/>
            <person name="Khouri H."/>
            <person name="Tallon L.J."/>
            <person name="Zaborsky J.M."/>
            <person name="Dunbar H.E."/>
            <person name="Tran P.L."/>
            <person name="Moran N.A."/>
            <person name="Eisen J.A."/>
        </authorList>
    </citation>
    <scope>NUCLEOTIDE SEQUENCE [LARGE SCALE GENOMIC DNA]</scope>
</reference>
<evidence type="ECO:0000255" key="1">
    <source>
        <dbReference type="HAMAP-Rule" id="MF_01331"/>
    </source>
</evidence>
<evidence type="ECO:0000305" key="2"/>
<proteinExistence type="inferred from homology"/>
<gene>
    <name evidence="1" type="primary">rplV</name>
    <name type="ordered locus">BCI_0333</name>
</gene>
<protein>
    <recommendedName>
        <fullName evidence="1">Large ribosomal subunit protein uL22</fullName>
    </recommendedName>
    <alternativeName>
        <fullName evidence="2">50S ribosomal protein L22</fullName>
    </alternativeName>
</protein>
<keyword id="KW-1185">Reference proteome</keyword>
<keyword id="KW-0687">Ribonucleoprotein</keyword>
<keyword id="KW-0689">Ribosomal protein</keyword>
<keyword id="KW-0694">RNA-binding</keyword>
<keyword id="KW-0699">rRNA-binding</keyword>
<dbReference type="EMBL" id="CP000238">
    <property type="protein sequence ID" value="ABF13787.1"/>
    <property type="molecule type" value="Genomic_DNA"/>
</dbReference>
<dbReference type="RefSeq" id="WP_011520514.1">
    <property type="nucleotide sequence ID" value="NC_007984.1"/>
</dbReference>
<dbReference type="SMR" id="Q1LTD3"/>
<dbReference type="STRING" id="374463.BCI_0333"/>
<dbReference type="KEGG" id="bci:BCI_0333"/>
<dbReference type="HOGENOM" id="CLU_083987_3_3_6"/>
<dbReference type="OrthoDB" id="9805969at2"/>
<dbReference type="Proteomes" id="UP000002427">
    <property type="component" value="Chromosome"/>
</dbReference>
<dbReference type="GO" id="GO:0022625">
    <property type="term" value="C:cytosolic large ribosomal subunit"/>
    <property type="evidence" value="ECO:0007669"/>
    <property type="project" value="TreeGrafter"/>
</dbReference>
<dbReference type="GO" id="GO:0019843">
    <property type="term" value="F:rRNA binding"/>
    <property type="evidence" value="ECO:0007669"/>
    <property type="project" value="UniProtKB-UniRule"/>
</dbReference>
<dbReference type="GO" id="GO:0003735">
    <property type="term" value="F:structural constituent of ribosome"/>
    <property type="evidence" value="ECO:0007669"/>
    <property type="project" value="InterPro"/>
</dbReference>
<dbReference type="GO" id="GO:0006412">
    <property type="term" value="P:translation"/>
    <property type="evidence" value="ECO:0007669"/>
    <property type="project" value="UniProtKB-UniRule"/>
</dbReference>
<dbReference type="CDD" id="cd00336">
    <property type="entry name" value="Ribosomal_L22"/>
    <property type="match status" value="1"/>
</dbReference>
<dbReference type="FunFam" id="3.90.470.10:FF:000001">
    <property type="entry name" value="50S ribosomal protein L22"/>
    <property type="match status" value="1"/>
</dbReference>
<dbReference type="Gene3D" id="3.90.470.10">
    <property type="entry name" value="Ribosomal protein L22/L17"/>
    <property type="match status" value="1"/>
</dbReference>
<dbReference type="HAMAP" id="MF_01331_B">
    <property type="entry name" value="Ribosomal_uL22_B"/>
    <property type="match status" value="1"/>
</dbReference>
<dbReference type="InterPro" id="IPR001063">
    <property type="entry name" value="Ribosomal_uL22"/>
</dbReference>
<dbReference type="InterPro" id="IPR005727">
    <property type="entry name" value="Ribosomal_uL22_bac/chlpt-type"/>
</dbReference>
<dbReference type="InterPro" id="IPR047867">
    <property type="entry name" value="Ribosomal_uL22_bac/org-type"/>
</dbReference>
<dbReference type="InterPro" id="IPR018260">
    <property type="entry name" value="Ribosomal_uL22_CS"/>
</dbReference>
<dbReference type="InterPro" id="IPR036394">
    <property type="entry name" value="Ribosomal_uL22_sf"/>
</dbReference>
<dbReference type="NCBIfam" id="TIGR01044">
    <property type="entry name" value="rplV_bact"/>
    <property type="match status" value="1"/>
</dbReference>
<dbReference type="PANTHER" id="PTHR13501">
    <property type="entry name" value="CHLOROPLAST 50S RIBOSOMAL PROTEIN L22-RELATED"/>
    <property type="match status" value="1"/>
</dbReference>
<dbReference type="PANTHER" id="PTHR13501:SF8">
    <property type="entry name" value="LARGE RIBOSOMAL SUBUNIT PROTEIN UL22M"/>
    <property type="match status" value="1"/>
</dbReference>
<dbReference type="Pfam" id="PF00237">
    <property type="entry name" value="Ribosomal_L22"/>
    <property type="match status" value="1"/>
</dbReference>
<dbReference type="SUPFAM" id="SSF54843">
    <property type="entry name" value="Ribosomal protein L22"/>
    <property type="match status" value="1"/>
</dbReference>
<dbReference type="PROSITE" id="PS00464">
    <property type="entry name" value="RIBOSOMAL_L22"/>
    <property type="match status" value="1"/>
</dbReference>
<feature type="chain" id="PRO_1000052540" description="Large ribosomal subunit protein uL22">
    <location>
        <begin position="1"/>
        <end position="110"/>
    </location>
</feature>
<accession>Q1LTD3</accession>
<organism>
    <name type="scientific">Baumannia cicadellinicola subsp. Homalodisca coagulata</name>
    <dbReference type="NCBI Taxonomy" id="374463"/>
    <lineage>
        <taxon>Bacteria</taxon>
        <taxon>Pseudomonadati</taxon>
        <taxon>Pseudomonadota</taxon>
        <taxon>Gammaproteobacteria</taxon>
        <taxon>Candidatus Palibaumannia</taxon>
    </lineage>
</organism>
<comment type="function">
    <text evidence="1">This protein binds specifically to 23S rRNA; its binding is stimulated by other ribosomal proteins, e.g. L4, L17, and L20. It is important during the early stages of 50S assembly. It makes multiple contacts with different domains of the 23S rRNA in the assembled 50S subunit and ribosome (By similarity).</text>
</comment>
<comment type="function">
    <text evidence="1">The globular domain of the protein is located near the polypeptide exit tunnel on the outside of the subunit, while an extended beta-hairpin is found that lines the wall of the exit tunnel in the center of the 70S ribosome.</text>
</comment>
<comment type="subunit">
    <text evidence="1">Part of the 50S ribosomal subunit.</text>
</comment>
<comment type="similarity">
    <text evidence="1">Belongs to the universal ribosomal protein uL22 family.</text>
</comment>
<name>RL22_BAUCH</name>